<name>IOVO_LEIOC</name>
<sequence>VVTVDCSGYPTHACTLELKPLCGSDNQTYSNKCGFCNAVAQSNGTLTLSHFGKC</sequence>
<comment type="subcellular location">
    <subcellularLocation>
        <location>Secreted</location>
    </subcellularLocation>
</comment>
<comment type="domain">
    <text>Avian ovomucoid consists of three homologous, tandem Kazal family inhibitory domains.</text>
</comment>
<protein>
    <recommendedName>
        <fullName>Ovomucoid</fullName>
    </recommendedName>
</protein>
<accession>P05581</accession>
<reference key="1">
    <citation type="journal article" date="1987" name="Biochemistry">
        <title>Ovomucoid third domains from 100 avian species: isolation, sequences, and hypervariability of enzyme-inhibitor contact residues.</title>
        <authorList>
            <person name="Laskowski M. Jr."/>
            <person name="Kato I."/>
            <person name="Ardelt W."/>
            <person name="Cook J."/>
            <person name="Denton A."/>
            <person name="Empie M.W."/>
            <person name="Kohr W.J."/>
            <person name="Park S.J."/>
            <person name="Parks K."/>
            <person name="Schatzley B.L."/>
            <person name="Schoenberger O.L."/>
            <person name="Tashiro M."/>
            <person name="Vichot G."/>
            <person name="Whatley H.E."/>
            <person name="Wieczorek A."/>
            <person name="Wieczorek M."/>
        </authorList>
    </citation>
    <scope>PROTEIN SEQUENCE</scope>
</reference>
<proteinExistence type="evidence at protein level"/>
<feature type="chain" id="PRO_0000073129" description="Ovomucoid">
    <location>
        <begin position="1" status="less than"/>
        <end position="54" status="greater than"/>
    </location>
</feature>
<feature type="domain" description="Kazal-like" evidence="1">
    <location>
        <begin position="4"/>
        <end position="54"/>
    </location>
</feature>
<feature type="site" description="Reactive bond 3">
    <location>
        <begin position="16"/>
        <end position="17"/>
    </location>
</feature>
<feature type="glycosylation site" description="N-linked (GlcNAc...) asparagine" evidence="2">
    <location>
        <position position="43"/>
    </location>
</feature>
<feature type="disulfide bond">
    <location>
        <begin position="6"/>
        <end position="36"/>
    </location>
</feature>
<feature type="disulfide bond">
    <location>
        <begin position="14"/>
        <end position="33"/>
    </location>
</feature>
<feature type="disulfide bond">
    <location>
        <begin position="22"/>
        <end position="54"/>
    </location>
</feature>
<feature type="non-terminal residue">
    <location>
        <position position="1"/>
    </location>
</feature>
<feature type="non-terminal residue">
    <location>
        <position position="54"/>
    </location>
</feature>
<organism>
    <name type="scientific">Leipoa ocellata</name>
    <name type="common">Malleefowl</name>
    <dbReference type="NCBI Taxonomy" id="8981"/>
    <lineage>
        <taxon>Eukaryota</taxon>
        <taxon>Metazoa</taxon>
        <taxon>Chordata</taxon>
        <taxon>Craniata</taxon>
        <taxon>Vertebrata</taxon>
        <taxon>Euteleostomi</taxon>
        <taxon>Archelosauria</taxon>
        <taxon>Archosauria</taxon>
        <taxon>Dinosauria</taxon>
        <taxon>Saurischia</taxon>
        <taxon>Theropoda</taxon>
        <taxon>Coelurosauria</taxon>
        <taxon>Aves</taxon>
        <taxon>Neognathae</taxon>
        <taxon>Galloanserae</taxon>
        <taxon>Galliformes</taxon>
        <taxon>Megapodiidae</taxon>
        <taxon>Leipoa</taxon>
    </lineage>
</organism>
<evidence type="ECO:0000255" key="1">
    <source>
        <dbReference type="PROSITE-ProRule" id="PRU00798"/>
    </source>
</evidence>
<evidence type="ECO:0000269" key="2">
    <source>
    </source>
</evidence>
<keyword id="KW-0903">Direct protein sequencing</keyword>
<keyword id="KW-1015">Disulfide bond</keyword>
<keyword id="KW-0325">Glycoprotein</keyword>
<keyword id="KW-0646">Protease inhibitor</keyword>
<keyword id="KW-0677">Repeat</keyword>
<keyword id="KW-0964">Secreted</keyword>
<keyword id="KW-0722">Serine protease inhibitor</keyword>
<dbReference type="PIR" id="D31443">
    <property type="entry name" value="D31443"/>
</dbReference>
<dbReference type="SMR" id="P05581"/>
<dbReference type="iPTMnet" id="P05581"/>
<dbReference type="GO" id="GO:0005576">
    <property type="term" value="C:extracellular region"/>
    <property type="evidence" value="ECO:0007669"/>
    <property type="project" value="UniProtKB-SubCell"/>
</dbReference>
<dbReference type="GO" id="GO:0004867">
    <property type="term" value="F:serine-type endopeptidase inhibitor activity"/>
    <property type="evidence" value="ECO:0007669"/>
    <property type="project" value="UniProtKB-KW"/>
</dbReference>
<dbReference type="FunFam" id="3.30.60.30:FF:000037">
    <property type="entry name" value="Ovomucoid"/>
    <property type="match status" value="1"/>
</dbReference>
<dbReference type="Gene3D" id="3.30.60.30">
    <property type="match status" value="1"/>
</dbReference>
<dbReference type="InterPro" id="IPR051597">
    <property type="entry name" value="Bifunctional_prot_inhibitor"/>
</dbReference>
<dbReference type="InterPro" id="IPR002350">
    <property type="entry name" value="Kazal_dom"/>
</dbReference>
<dbReference type="InterPro" id="IPR036058">
    <property type="entry name" value="Kazal_dom_sf"/>
</dbReference>
<dbReference type="PANTHER" id="PTHR47729:SF1">
    <property type="entry name" value="OVOMUCOID-LIKE-RELATED"/>
    <property type="match status" value="1"/>
</dbReference>
<dbReference type="PANTHER" id="PTHR47729">
    <property type="entry name" value="SERINE PEPTIDASE INHIBITOR, KAZAL TYPE 2, TANDEM DUPLICATE 1-RELATED"/>
    <property type="match status" value="1"/>
</dbReference>
<dbReference type="Pfam" id="PF00050">
    <property type="entry name" value="Kazal_1"/>
    <property type="match status" value="1"/>
</dbReference>
<dbReference type="SMART" id="SM00280">
    <property type="entry name" value="KAZAL"/>
    <property type="match status" value="1"/>
</dbReference>
<dbReference type="SUPFAM" id="SSF100895">
    <property type="entry name" value="Kazal-type serine protease inhibitors"/>
    <property type="match status" value="1"/>
</dbReference>
<dbReference type="PROSITE" id="PS00282">
    <property type="entry name" value="KAZAL_1"/>
    <property type="match status" value="1"/>
</dbReference>
<dbReference type="PROSITE" id="PS51465">
    <property type="entry name" value="KAZAL_2"/>
    <property type="match status" value="1"/>
</dbReference>